<name>PHT11_ARATH</name>
<keyword id="KW-1003">Cell membrane</keyword>
<keyword id="KW-0472">Membrane</keyword>
<keyword id="KW-0592">Phosphate transport</keyword>
<keyword id="KW-1185">Reference proteome</keyword>
<keyword id="KW-0769">Symport</keyword>
<keyword id="KW-0812">Transmembrane</keyword>
<keyword id="KW-1133">Transmembrane helix</keyword>
<keyword id="KW-0813">Transport</keyword>
<keyword id="KW-0832">Ubl conjugation</keyword>
<evidence type="ECO:0000255" key="1"/>
<evidence type="ECO:0000269" key="2">
    <source>
    </source>
</evidence>
<evidence type="ECO:0000269" key="3">
    <source>
    </source>
</evidence>
<evidence type="ECO:0000269" key="4">
    <source>
    </source>
</evidence>
<evidence type="ECO:0000269" key="5">
    <source>
    </source>
</evidence>
<evidence type="ECO:0000269" key="6">
    <source>
    </source>
</evidence>
<evidence type="ECO:0000269" key="7">
    <source>
    </source>
</evidence>
<evidence type="ECO:0000269" key="8">
    <source>
    </source>
</evidence>
<evidence type="ECO:0000269" key="9">
    <source>
    </source>
</evidence>
<evidence type="ECO:0000269" key="10">
    <source>
    </source>
</evidence>
<evidence type="ECO:0000269" key="11">
    <source>
    </source>
</evidence>
<evidence type="ECO:0000305" key="12"/>
<dbReference type="EMBL" id="U62330">
    <property type="protein sequence ID" value="AAB17265.1"/>
    <property type="molecule type" value="mRNA"/>
</dbReference>
<dbReference type="EMBL" id="Y07682">
    <property type="protein sequence ID" value="CAA68946.1"/>
    <property type="molecule type" value="Genomic_DNA"/>
</dbReference>
<dbReference type="EMBL" id="D86591">
    <property type="protein sequence ID" value="BAA21503.1"/>
    <property type="molecule type" value="mRNA"/>
</dbReference>
<dbReference type="EMBL" id="D86608">
    <property type="protein sequence ID" value="BAA21504.1"/>
    <property type="molecule type" value="Genomic_DNA"/>
</dbReference>
<dbReference type="EMBL" id="AB025638">
    <property type="protein sequence ID" value="BAA97414.1"/>
    <property type="molecule type" value="Genomic_DNA"/>
</dbReference>
<dbReference type="EMBL" id="CP002688">
    <property type="protein sequence ID" value="AED94948.1"/>
    <property type="molecule type" value="Genomic_DNA"/>
</dbReference>
<dbReference type="EMBL" id="AY070432">
    <property type="protein sequence ID" value="AAL49927.1"/>
    <property type="molecule type" value="mRNA"/>
</dbReference>
<dbReference type="SMR" id="Q8VYM2"/>
<dbReference type="BioGRID" id="19603">
    <property type="interactions" value="8"/>
</dbReference>
<dbReference type="FunCoup" id="Q8VYM2">
    <property type="interactions" value="343"/>
</dbReference>
<dbReference type="IntAct" id="Q8VYM2">
    <property type="interactions" value="2"/>
</dbReference>
<dbReference type="STRING" id="3702.Q8VYM2"/>
<dbReference type="TCDB" id="2.A.1.9.9">
    <property type="family name" value="the major facilitator superfamily (mfs)"/>
</dbReference>
<dbReference type="iPTMnet" id="Q8VYM2"/>
<dbReference type="PaxDb" id="3702-AT5G43350.1"/>
<dbReference type="ProteomicsDB" id="236733"/>
<dbReference type="EnsemblPlants" id="AT5G43350.1">
    <property type="protein sequence ID" value="AT5G43350.1"/>
    <property type="gene ID" value="AT5G43350"/>
</dbReference>
<dbReference type="GeneID" id="834353"/>
<dbReference type="Gramene" id="AT5G43350.1">
    <property type="protein sequence ID" value="AT5G43350.1"/>
    <property type="gene ID" value="AT5G43350"/>
</dbReference>
<dbReference type="KEGG" id="ath:AT5G43350"/>
<dbReference type="Araport" id="AT5G43350"/>
<dbReference type="TAIR" id="AT5G43350">
    <property type="gene designation" value="PHT1"/>
</dbReference>
<dbReference type="eggNOG" id="KOG0252">
    <property type="taxonomic scope" value="Eukaryota"/>
</dbReference>
<dbReference type="HOGENOM" id="CLU_001265_46_14_1"/>
<dbReference type="InParanoid" id="Q8VYM2"/>
<dbReference type="OMA" id="GVMTTIC"/>
<dbReference type="OrthoDB" id="2015989at2759"/>
<dbReference type="PhylomeDB" id="Q8VYM2"/>
<dbReference type="BioCyc" id="MetaCyc:MONOMER-21678"/>
<dbReference type="PRO" id="PR:Q8VYM2"/>
<dbReference type="Proteomes" id="UP000006548">
    <property type="component" value="Chromosome 5"/>
</dbReference>
<dbReference type="ExpressionAtlas" id="Q8VYM2">
    <property type="expression patterns" value="baseline and differential"/>
</dbReference>
<dbReference type="GO" id="GO:0005886">
    <property type="term" value="C:plasma membrane"/>
    <property type="evidence" value="ECO:0007005"/>
    <property type="project" value="TAIR"/>
</dbReference>
<dbReference type="GO" id="GO:1901683">
    <property type="term" value="F:arsenate ion transmembrane transporter activity"/>
    <property type="evidence" value="ECO:0000315"/>
    <property type="project" value="TAIR"/>
</dbReference>
<dbReference type="GO" id="GO:0005315">
    <property type="term" value="F:phosphate transmembrane transporter activity"/>
    <property type="evidence" value="ECO:0000314"/>
    <property type="project" value="TAIR"/>
</dbReference>
<dbReference type="GO" id="GO:0015293">
    <property type="term" value="F:symporter activity"/>
    <property type="evidence" value="ECO:0007669"/>
    <property type="project" value="UniProtKB-KW"/>
</dbReference>
<dbReference type="GO" id="GO:1901684">
    <property type="term" value="P:arsenate ion transmembrane transport"/>
    <property type="evidence" value="ECO:0000315"/>
    <property type="project" value="TAIR"/>
</dbReference>
<dbReference type="GO" id="GO:0016036">
    <property type="term" value="P:cellular response to phosphate starvation"/>
    <property type="evidence" value="ECO:0000270"/>
    <property type="project" value="TAIR"/>
</dbReference>
<dbReference type="GO" id="GO:0006817">
    <property type="term" value="P:phosphate ion transport"/>
    <property type="evidence" value="ECO:0000314"/>
    <property type="project" value="TAIR"/>
</dbReference>
<dbReference type="CDD" id="cd17364">
    <property type="entry name" value="MFS_PhT"/>
    <property type="match status" value="1"/>
</dbReference>
<dbReference type="FunFam" id="1.20.1250.20:FF:000175">
    <property type="entry name" value="Inorganic phosphate transporter 1-6"/>
    <property type="match status" value="1"/>
</dbReference>
<dbReference type="Gene3D" id="1.20.1250.20">
    <property type="entry name" value="MFS general substrate transporter like domains"/>
    <property type="match status" value="1"/>
</dbReference>
<dbReference type="InterPro" id="IPR020846">
    <property type="entry name" value="MFS_dom"/>
</dbReference>
<dbReference type="InterPro" id="IPR005828">
    <property type="entry name" value="MFS_sugar_transport-like"/>
</dbReference>
<dbReference type="InterPro" id="IPR036259">
    <property type="entry name" value="MFS_trans_sf"/>
</dbReference>
<dbReference type="InterPro" id="IPR004738">
    <property type="entry name" value="Phos_permease"/>
</dbReference>
<dbReference type="NCBIfam" id="TIGR00887">
    <property type="entry name" value="2A0109"/>
    <property type="match status" value="1"/>
</dbReference>
<dbReference type="PANTHER" id="PTHR24064">
    <property type="entry name" value="SOLUTE CARRIER FAMILY 22 MEMBER"/>
    <property type="match status" value="1"/>
</dbReference>
<dbReference type="Pfam" id="PF00083">
    <property type="entry name" value="Sugar_tr"/>
    <property type="match status" value="1"/>
</dbReference>
<dbReference type="SUPFAM" id="SSF103473">
    <property type="entry name" value="MFS general substrate transporter"/>
    <property type="match status" value="1"/>
</dbReference>
<dbReference type="PROSITE" id="PS50850">
    <property type="entry name" value="MFS"/>
    <property type="match status" value="1"/>
</dbReference>
<comment type="function">
    <text evidence="5 9 11">High-affinity transporter for external inorganic phosphate. Acts as a H(+):phosphate symporter in both low- and high-Pi conditions. Confers sensitivity to arsenate.</text>
</comment>
<comment type="activity regulation">
    <text evidence="11">Inhibited by protonophores (e.g. 2,4-dinitrophenol and carbonylcyanide m-chlorophenylhydrazone), the plasma membrane H(+)-ATPase inhibitor diethylstilbestorol, and the phosphate analog arsenate.</text>
</comment>
<comment type="biophysicochemical properties">
    <kinetics>
        <KM evidence="11">3 uM for inorganic phosphate</KM>
    </kinetics>
</comment>
<comment type="subunit">
    <text evidence="8">Interacts with NLA.</text>
</comment>
<comment type="subcellular location">
    <subcellularLocation>
        <location evidence="7 8">Cell membrane</location>
        <topology evidence="7">Multi-pass membrane protein</topology>
    </subcellularLocation>
    <text evidence="8">Localizes at the plasma membrane, where it interacts with NLA.</text>
</comment>
<comment type="tissue specificity">
    <text evidence="3 4 6 9 10 11">Mostly expressed in roots, especially in trichoblasts and in emerging secondary roots and root hairs, but not in root tips. Also present in hydathodes, axillary buds and peripheral endosperm of germinating seeds.</text>
</comment>
<comment type="induction">
    <text evidence="2 3 4 5 6 9 10">In roots by phosphate starvation. Repressed by auxin, cytokinins, and the Pi analog phosphite (Phi).</text>
</comment>
<comment type="PTM">
    <text evidence="8">Ubiquitinated by NLA. Ubiquitination of PHT1-1 leads to its degradation by the proteasome.</text>
</comment>
<comment type="miscellaneous">
    <text>Although related to the sugar transporter family, it does not transport sugars.</text>
</comment>
<comment type="similarity">
    <text evidence="12">Belongs to the major facilitator superfamily. Phosphate:H(+) symporter (TC 2.A.1.9) family.</text>
</comment>
<feature type="chain" id="PRO_0000050468" description="Inorganic phosphate transporter 1-1">
    <location>
        <begin position="1"/>
        <end position="524"/>
    </location>
</feature>
<feature type="topological domain" description="Cytoplasmic" evidence="1">
    <location>
        <begin position="1"/>
        <end position="24"/>
    </location>
</feature>
<feature type="transmembrane region" description="Helical" evidence="1">
    <location>
        <begin position="25"/>
        <end position="45"/>
    </location>
</feature>
<feature type="topological domain" description="Extracellular" evidence="1">
    <location>
        <begin position="46"/>
        <end position="70"/>
    </location>
</feature>
<feature type="transmembrane region" description="Helical" evidence="1">
    <location>
        <begin position="71"/>
        <end position="91"/>
    </location>
</feature>
<feature type="topological domain" description="Cytoplasmic" evidence="1">
    <location>
        <begin position="92"/>
        <end position="99"/>
    </location>
</feature>
<feature type="transmembrane region" description="Helical" evidence="1">
    <location>
        <begin position="100"/>
        <end position="120"/>
    </location>
</feature>
<feature type="topological domain" description="Extracellular" evidence="1">
    <location>
        <begin position="121"/>
        <end position="131"/>
    </location>
</feature>
<feature type="transmembrane region" description="Helical" evidence="1">
    <location>
        <begin position="132"/>
        <end position="152"/>
    </location>
</feature>
<feature type="topological domain" description="Cytoplasmic" evidence="1">
    <location>
        <begin position="153"/>
        <end position="161"/>
    </location>
</feature>
<feature type="transmembrane region" description="Helical" evidence="1">
    <location>
        <begin position="162"/>
        <end position="182"/>
    </location>
</feature>
<feature type="topological domain" description="Extracellular" evidence="1">
    <location>
        <begin position="183"/>
        <end position="211"/>
    </location>
</feature>
<feature type="transmembrane region" description="Helical" evidence="1">
    <location>
        <begin position="212"/>
        <end position="232"/>
    </location>
</feature>
<feature type="topological domain" description="Cytoplasmic" evidence="1">
    <location>
        <begin position="233"/>
        <end position="292"/>
    </location>
</feature>
<feature type="transmembrane region" description="Helical" evidence="1">
    <location>
        <begin position="293"/>
        <end position="313"/>
    </location>
</feature>
<feature type="topological domain" description="Extracellular" evidence="1">
    <location>
        <begin position="314"/>
        <end position="348"/>
    </location>
</feature>
<feature type="transmembrane region" description="Helical" evidence="1">
    <location>
        <begin position="349"/>
        <end position="369"/>
    </location>
</feature>
<feature type="topological domain" description="Cytoplasmic" evidence="1">
    <location>
        <begin position="370"/>
        <end position="371"/>
    </location>
</feature>
<feature type="transmembrane region" description="Helical" evidence="1">
    <location>
        <begin position="372"/>
        <end position="392"/>
    </location>
</feature>
<feature type="topological domain" description="Extracellular" evidence="1">
    <location>
        <begin position="393"/>
        <end position="402"/>
    </location>
</feature>
<feature type="transmembrane region" description="Helical" evidence="1">
    <location>
        <begin position="403"/>
        <end position="423"/>
    </location>
</feature>
<feature type="topological domain" description="Cytoplasmic" evidence="1">
    <location>
        <begin position="424"/>
        <end position="441"/>
    </location>
</feature>
<feature type="transmembrane region" description="Helical" evidence="1">
    <location>
        <begin position="442"/>
        <end position="462"/>
    </location>
</feature>
<feature type="topological domain" description="Extracellular" evidence="1">
    <location>
        <begin position="463"/>
        <end position="484"/>
    </location>
</feature>
<feature type="transmembrane region" description="Helical" evidence="1">
    <location>
        <begin position="485"/>
        <end position="505"/>
    </location>
</feature>
<feature type="topological domain" description="Cytoplasmic" evidence="1">
    <location>
        <begin position="506"/>
        <end position="524"/>
    </location>
</feature>
<feature type="sequence conflict" description="In Ref. 6; AAL49927." evidence="12" ref="6">
    <original>A</original>
    <variation>T</variation>
    <location>
        <position position="185"/>
    </location>
</feature>
<feature type="sequence conflict" description="In Ref. 2; CAA68946." evidence="12" ref="2">
    <original>A</original>
    <variation>P</variation>
    <location>
        <position position="469"/>
    </location>
</feature>
<accession>Q8VYM2</accession>
<accession>Q96264</accession>
<accession>Q96302</accession>
<sequence length="524" mass="57616">MAEQQLGVLKALDVAKTQLYHFTAIVIAGMGFFTDAYDLFCVSLVTKLLGRIYYFNPESAKPGSLPPHVAAAVNGVALCGTLSGQLFFGWLGDKLGRKKVYGLTLVMMILCSVASGLSFGHEAKGVMTTLCFFRFWLGFGIGGDYPLSATIMSEYANKKTRGAFIAAVFAMQGVGILAGGFVALAVSSIFDKKFPAPTYAVNRALSTPPQVDYIWRIIVMFGALPAALTYYWRMKMPETARYTALVAKNIKQATADMSKVLQTDIELEERVEDDVKDPKQNYGLFSKEFLRRHGLHLLGTTSTWFLLDIAFYSQNLFQKDIFSAIGWIPKAATMNATHEVFRIARAQTLIALCSTVPGYWFTVAFIDTIGRFKIQLNGFFMMTVFMFAIAFPYNHWIKPENRIGFVVMYSLTFFFANFGPNATTFIVPAEIFPARLRSTCHGISAAAGKAGAIVGAFGFLYAAQSQDKAKVDAGYPPGIGVKNSLIMLGVLNFIGMLFTFLVPEPKGKSLEELSGEAEVSHDEK</sequence>
<organism>
    <name type="scientific">Arabidopsis thaliana</name>
    <name type="common">Mouse-ear cress</name>
    <dbReference type="NCBI Taxonomy" id="3702"/>
    <lineage>
        <taxon>Eukaryota</taxon>
        <taxon>Viridiplantae</taxon>
        <taxon>Streptophyta</taxon>
        <taxon>Embryophyta</taxon>
        <taxon>Tracheophyta</taxon>
        <taxon>Spermatophyta</taxon>
        <taxon>Magnoliopsida</taxon>
        <taxon>eudicotyledons</taxon>
        <taxon>Gunneridae</taxon>
        <taxon>Pentapetalae</taxon>
        <taxon>rosids</taxon>
        <taxon>malvids</taxon>
        <taxon>Brassicales</taxon>
        <taxon>Brassicaceae</taxon>
        <taxon>Camelineae</taxon>
        <taxon>Arabidopsis</taxon>
    </lineage>
</organism>
<gene>
    <name type="primary">PHT1-1</name>
    <name type="synonym">APT2</name>
    <name type="synonym">PHT1</name>
    <name type="synonym">PT1</name>
    <name type="ordered locus">At5g43350</name>
    <name type="ORF">MWF20.4</name>
</gene>
<proteinExistence type="evidence at protein level"/>
<protein>
    <recommendedName>
        <fullName>Inorganic phosphate transporter 1-1</fullName>
        <shortName>AtPht1;1</shortName>
    </recommendedName>
    <alternativeName>
        <fullName>H(+)/Pi cotransporter</fullName>
    </alternativeName>
</protein>
<reference key="1">
    <citation type="journal article" date="1996" name="Proc. Natl. Acad. Sci. U.S.A.">
        <title>Phosphate transporters from the higher plant Arabidopsis thaliana.</title>
        <authorList>
            <person name="Muchhal U.S."/>
            <person name="Pardo J.M."/>
            <person name="Raghothama K.G."/>
        </authorList>
    </citation>
    <scope>NUCLEOTIDE SEQUENCE [MRNA]</scope>
    <scope>FUNCTION</scope>
    <scope>TISSUE SPECIFICITY</scope>
    <scope>INDUCTION</scope>
    <source>
        <strain>cv. Columbia</strain>
        <tissue>Root</tissue>
    </source>
</reference>
<reference key="2">
    <citation type="journal article" date="1997" name="Plant J.">
        <title>The cloning of two Arabidopsis genes belonging to a phosphate transporter family.</title>
        <authorList>
            <person name="Smith F.W."/>
            <person name="Ealing P.M."/>
            <person name="Dong B."/>
            <person name="Delhaize E."/>
        </authorList>
    </citation>
    <scope>NUCLEOTIDE SEQUENCE [GENOMIC DNA]</scope>
    <scope>TISSUE SPECIFICITY</scope>
    <scope>INDUCTION</scope>
    <source>
        <strain>cv. Columbia</strain>
        <tissue>Root</tissue>
    </source>
</reference>
<reference key="3">
    <citation type="journal article" date="1997" name="Proc. Natl. Acad. Sci. U.S.A.">
        <title>Overexpression of an Arabidopsis thaliana high-affinity phosphate transporter gene in tobacco cultured cells enhances cell growth under phosphate-limited conditions.</title>
        <authorList>
            <person name="Mitsukawa N."/>
            <person name="Okumura S."/>
            <person name="Shirano Y."/>
            <person name="Sato S."/>
            <person name="Kato T."/>
            <person name="Harashima S."/>
            <person name="Shibata D."/>
        </authorList>
    </citation>
    <scope>NUCLEOTIDE SEQUENCE [GENOMIC DNA / MRNA]</scope>
    <scope>FUNCTION</scope>
    <scope>TISSUE SPECIFICITY</scope>
    <scope>BIOPHYSICOCHEMICAL PROPERTIES</scope>
    <scope>ACTIVITY REGULATION</scope>
    <source>
        <strain>cv. Columbia</strain>
    </source>
</reference>
<reference key="4">
    <citation type="journal article" date="2000" name="DNA Res.">
        <title>Structural analysis of Arabidopsis thaliana chromosome 5. X. Sequence features of the regions of 3,076,755 bp covered by sixty P1 and TAC clones.</title>
        <authorList>
            <person name="Sato S."/>
            <person name="Nakamura Y."/>
            <person name="Kaneko T."/>
            <person name="Katoh T."/>
            <person name="Asamizu E."/>
            <person name="Kotani H."/>
            <person name="Tabata S."/>
        </authorList>
    </citation>
    <scope>NUCLEOTIDE SEQUENCE [LARGE SCALE GENOMIC DNA]</scope>
    <source>
        <strain>cv. Columbia</strain>
    </source>
</reference>
<reference key="5">
    <citation type="journal article" date="2017" name="Plant J.">
        <title>Araport11: a complete reannotation of the Arabidopsis thaliana reference genome.</title>
        <authorList>
            <person name="Cheng C.Y."/>
            <person name="Krishnakumar V."/>
            <person name="Chan A.P."/>
            <person name="Thibaud-Nissen F."/>
            <person name="Schobel S."/>
            <person name="Town C.D."/>
        </authorList>
    </citation>
    <scope>GENOME REANNOTATION</scope>
    <source>
        <strain>cv. Columbia</strain>
    </source>
</reference>
<reference key="6">
    <citation type="journal article" date="2003" name="Science">
        <title>Empirical analysis of transcriptional activity in the Arabidopsis genome.</title>
        <authorList>
            <person name="Yamada K."/>
            <person name="Lim J."/>
            <person name="Dale J.M."/>
            <person name="Chen H."/>
            <person name="Shinn P."/>
            <person name="Palm C.J."/>
            <person name="Southwick A.M."/>
            <person name="Wu H.C."/>
            <person name="Kim C.J."/>
            <person name="Nguyen M."/>
            <person name="Pham P.K."/>
            <person name="Cheuk R.F."/>
            <person name="Karlin-Newmann G."/>
            <person name="Liu S.X."/>
            <person name="Lam B."/>
            <person name="Sakano H."/>
            <person name="Wu T."/>
            <person name="Yu G."/>
            <person name="Miranda M."/>
            <person name="Quach H.L."/>
            <person name="Tripp M."/>
            <person name="Chang C.H."/>
            <person name="Lee J.M."/>
            <person name="Toriumi M.J."/>
            <person name="Chan M.M."/>
            <person name="Tang C.C."/>
            <person name="Onodera C.S."/>
            <person name="Deng J.M."/>
            <person name="Akiyama K."/>
            <person name="Ansari Y."/>
            <person name="Arakawa T."/>
            <person name="Banh J."/>
            <person name="Banno F."/>
            <person name="Bowser L."/>
            <person name="Brooks S.Y."/>
            <person name="Carninci P."/>
            <person name="Chao Q."/>
            <person name="Choy N."/>
            <person name="Enju A."/>
            <person name="Goldsmith A.D."/>
            <person name="Gurjal M."/>
            <person name="Hansen N.F."/>
            <person name="Hayashizaki Y."/>
            <person name="Johnson-Hopson C."/>
            <person name="Hsuan V.W."/>
            <person name="Iida K."/>
            <person name="Karnes M."/>
            <person name="Khan S."/>
            <person name="Koesema E."/>
            <person name="Ishida J."/>
            <person name="Jiang P.X."/>
            <person name="Jones T."/>
            <person name="Kawai J."/>
            <person name="Kamiya A."/>
            <person name="Meyers C."/>
            <person name="Nakajima M."/>
            <person name="Narusaka M."/>
            <person name="Seki M."/>
            <person name="Sakurai T."/>
            <person name="Satou M."/>
            <person name="Tamse R."/>
            <person name="Vaysberg M."/>
            <person name="Wallender E.K."/>
            <person name="Wong C."/>
            <person name="Yamamura Y."/>
            <person name="Yuan S."/>
            <person name="Shinozaki K."/>
            <person name="Davis R.W."/>
            <person name="Theologis A."/>
            <person name="Ecker J.R."/>
        </authorList>
    </citation>
    <scope>NUCLEOTIDE SEQUENCE [LARGE SCALE MRNA]</scope>
    <source>
        <strain>cv. Columbia</strain>
    </source>
</reference>
<reference key="7">
    <citation type="journal article" date="2002" name="Plant J.">
        <title>Expression analysis suggests novel roles for members of the Pht1 family of phosphate transporters in Arabidopsis.</title>
        <authorList>
            <person name="Mudge S.R."/>
            <person name="Rae A.L."/>
            <person name="Diatloff E."/>
            <person name="Smith F.W."/>
        </authorList>
    </citation>
    <scope>INDUCTION</scope>
    <scope>TISSUE SPECIFICITY</scope>
    <scope>GENE FAMILY</scope>
    <scope>NOMENCLATURE</scope>
</reference>
<reference key="8">
    <citation type="journal article" date="2002" name="Plant Physiol.">
        <title>Phosphite, an analog of phosphate, suppresses the coordinated expression of genes under phosphate starvation.</title>
        <authorList>
            <person name="Varadarajan D.K."/>
            <person name="Karthikeyan A.S."/>
            <person name="Matilda P.D."/>
            <person name="Raghothama K.G."/>
        </authorList>
    </citation>
    <scope>INDUCTION</scope>
</reference>
<reference key="9">
    <citation type="journal article" date="2002" name="Plant Physiol.">
        <title>Regulated expression of Arabidopsis phosphate transporters.</title>
        <authorList>
            <person name="Karthikeyan A.S."/>
            <person name="Varadarajan D.K."/>
            <person name="Mukatira U.T."/>
            <person name="D'Urzo M.P."/>
            <person name="Damsz B."/>
            <person name="Raghothama K.G."/>
        </authorList>
    </citation>
    <scope>TISSUE SPECIFICITY</scope>
    <scope>INDUCTION</scope>
</reference>
<reference key="10">
    <citation type="journal article" date="2004" name="Plant J.">
        <title>Phosphate transport in Arabidopsis: Pht1;1 and Pht1;4 play a major role in phosphate acquisition from both low- and high-phosphate environments.</title>
        <authorList>
            <person name="Shin H."/>
            <person name="Shin H.-S."/>
            <person name="Dewbre G.R."/>
            <person name="Harrison M.J."/>
        </authorList>
    </citation>
    <scope>FUNCTION</scope>
    <scope>INDUCTION</scope>
</reference>
<reference key="11">
    <citation type="journal article" date="2005" name="J. Biosci. Bioeng.">
        <title>Promoter of Arabidopsis thaliana phosphate transporter gene drives root-specific expression of transgene in rice.</title>
        <authorList>
            <person name="Koyama T."/>
            <person name="Ono T."/>
            <person name="Shimizu M."/>
            <person name="Jinbo T."/>
            <person name="Mizuno R."/>
            <person name="Tomita K."/>
            <person name="Mitsukawa N."/>
            <person name="Kawazu T."/>
            <person name="Kimura T."/>
            <person name="Ohmiya K."/>
            <person name="Sakka K."/>
        </authorList>
    </citation>
    <scope>TISSUE SPECIFICITY</scope>
    <scope>INDUCTION</scope>
</reference>
<reference key="12">
    <citation type="journal article" date="2005" name="Plant Cell">
        <title>PHOSPHATE TRANSPORTER TRAFFIC FACILITATOR1 is a plant-specific SEC12-related protein that enables the endoplasmic reticulum exit of a high-affinity phosphate transporter in Arabidopsis.</title>
        <authorList>
            <person name="Gonzalez E."/>
            <person name="Solano R."/>
            <person name="Rubio V."/>
            <person name="Leyva A."/>
            <person name="Paz-Ares J."/>
        </authorList>
    </citation>
    <scope>SUBCELLULAR LOCATION</scope>
</reference>
<reference key="13">
    <citation type="journal article" date="2013" name="Plant Cell">
        <title>Nitrogen limitation adaptation, a target of microRNA827, mediates degradation of plasma membrane-localized phosphate transporters to maintain phosphate homeostasis in Arabidopsis.</title>
        <authorList>
            <person name="Lin W.Y."/>
            <person name="Huang T.K."/>
            <person name="Chiou T.J."/>
        </authorList>
    </citation>
    <scope>INTERACTION WITH NLA</scope>
    <scope>SUBCELLULAR LOCATION</scope>
    <scope>UBIQUITINATION BY NLA</scope>
</reference>